<accession>A6QRA1</accession>
<accession>O23322</accession>
<feature type="chain" id="PRO_0000423334" description="DNA-directed RNA polymerase V subunit 7">
    <location>
        <begin position="1"/>
        <end position="178"/>
    </location>
</feature>
<name>NRPE7_ARATH</name>
<proteinExistence type="evidence at protein level"/>
<protein>
    <recommendedName>
        <fullName>DNA-directed RNA polymerase V subunit 7</fullName>
    </recommendedName>
</protein>
<reference key="1">
    <citation type="journal article" date="1998" name="Nature">
        <title>Analysis of 1.9 Mb of contiguous sequence from chromosome 4 of Arabidopsis thaliana.</title>
        <authorList>
            <person name="Bevan M."/>
            <person name="Bancroft I."/>
            <person name="Bent E."/>
            <person name="Love K."/>
            <person name="Goodman H.M."/>
            <person name="Dean C."/>
            <person name="Bergkamp R."/>
            <person name="Dirkse W."/>
            <person name="van Staveren M."/>
            <person name="Stiekema W."/>
            <person name="Drost L."/>
            <person name="Ridley P."/>
            <person name="Hudson S.-A."/>
            <person name="Patel K."/>
            <person name="Murphy G."/>
            <person name="Piffanelli P."/>
            <person name="Wedler H."/>
            <person name="Wedler E."/>
            <person name="Wambutt R."/>
            <person name="Weitzenegger T."/>
            <person name="Pohl T."/>
            <person name="Terryn N."/>
            <person name="Gielen J."/>
            <person name="Villarroel R."/>
            <person name="De Clercq R."/>
            <person name="van Montagu M."/>
            <person name="Lecharny A."/>
            <person name="Aubourg S."/>
            <person name="Gy I."/>
            <person name="Kreis M."/>
            <person name="Lao N."/>
            <person name="Kavanagh T."/>
            <person name="Hempel S."/>
            <person name="Kotter P."/>
            <person name="Entian K.-D."/>
            <person name="Rieger M."/>
            <person name="Schaefer M."/>
            <person name="Funk B."/>
            <person name="Mueller-Auer S."/>
            <person name="Silvey M."/>
            <person name="James R."/>
            <person name="Monfort A."/>
            <person name="Pons A."/>
            <person name="Puigdomenech P."/>
            <person name="Douka A."/>
            <person name="Voukelatou E."/>
            <person name="Milioni D."/>
            <person name="Hatzopoulos P."/>
            <person name="Piravandi E."/>
            <person name="Obermaier B."/>
            <person name="Hilbert H."/>
            <person name="Duesterhoeft A."/>
            <person name="Moores T."/>
            <person name="Jones J.D.G."/>
            <person name="Eneva T."/>
            <person name="Palme K."/>
            <person name="Benes V."/>
            <person name="Rechmann S."/>
            <person name="Ansorge W."/>
            <person name="Cooke R."/>
            <person name="Berger C."/>
            <person name="Delseny M."/>
            <person name="Voet M."/>
            <person name="Volckaert G."/>
            <person name="Mewes H.-W."/>
            <person name="Klosterman S."/>
            <person name="Schueller C."/>
            <person name="Chalwatzis N."/>
        </authorList>
    </citation>
    <scope>NUCLEOTIDE SEQUENCE [LARGE SCALE GENOMIC DNA]</scope>
    <source>
        <strain>cv. Columbia</strain>
    </source>
</reference>
<reference key="2">
    <citation type="journal article" date="1999" name="Nature">
        <title>Sequence and analysis of chromosome 4 of the plant Arabidopsis thaliana.</title>
        <authorList>
            <person name="Mayer K.F.X."/>
            <person name="Schueller C."/>
            <person name="Wambutt R."/>
            <person name="Murphy G."/>
            <person name="Volckaert G."/>
            <person name="Pohl T."/>
            <person name="Duesterhoeft A."/>
            <person name="Stiekema W."/>
            <person name="Entian K.-D."/>
            <person name="Terryn N."/>
            <person name="Harris B."/>
            <person name="Ansorge W."/>
            <person name="Brandt P."/>
            <person name="Grivell L.A."/>
            <person name="Rieger M."/>
            <person name="Weichselgartner M."/>
            <person name="de Simone V."/>
            <person name="Obermaier B."/>
            <person name="Mache R."/>
            <person name="Mueller M."/>
            <person name="Kreis M."/>
            <person name="Delseny M."/>
            <person name="Puigdomenech P."/>
            <person name="Watson M."/>
            <person name="Schmidtheini T."/>
            <person name="Reichert B."/>
            <person name="Portetelle D."/>
            <person name="Perez-Alonso M."/>
            <person name="Boutry M."/>
            <person name="Bancroft I."/>
            <person name="Vos P."/>
            <person name="Hoheisel J."/>
            <person name="Zimmermann W."/>
            <person name="Wedler H."/>
            <person name="Ridley P."/>
            <person name="Langham S.-A."/>
            <person name="McCullagh B."/>
            <person name="Bilham L."/>
            <person name="Robben J."/>
            <person name="van der Schueren J."/>
            <person name="Grymonprez B."/>
            <person name="Chuang Y.-J."/>
            <person name="Vandenbussche F."/>
            <person name="Braeken M."/>
            <person name="Weltjens I."/>
            <person name="Voet M."/>
            <person name="Bastiaens I."/>
            <person name="Aert R."/>
            <person name="Defoor E."/>
            <person name="Weitzenegger T."/>
            <person name="Bothe G."/>
            <person name="Ramsperger U."/>
            <person name="Hilbert H."/>
            <person name="Braun M."/>
            <person name="Holzer E."/>
            <person name="Brandt A."/>
            <person name="Peters S."/>
            <person name="van Staveren M."/>
            <person name="Dirkse W."/>
            <person name="Mooijman P."/>
            <person name="Klein Lankhorst R."/>
            <person name="Rose M."/>
            <person name="Hauf J."/>
            <person name="Koetter P."/>
            <person name="Berneiser S."/>
            <person name="Hempel S."/>
            <person name="Feldpausch M."/>
            <person name="Lamberth S."/>
            <person name="Van den Daele H."/>
            <person name="De Keyser A."/>
            <person name="Buysshaert C."/>
            <person name="Gielen J."/>
            <person name="Villarroel R."/>
            <person name="De Clercq R."/>
            <person name="van Montagu M."/>
            <person name="Rogers J."/>
            <person name="Cronin A."/>
            <person name="Quail M.A."/>
            <person name="Bray-Allen S."/>
            <person name="Clark L."/>
            <person name="Doggett J."/>
            <person name="Hall S."/>
            <person name="Kay M."/>
            <person name="Lennard N."/>
            <person name="McLay K."/>
            <person name="Mayes R."/>
            <person name="Pettett A."/>
            <person name="Rajandream M.A."/>
            <person name="Lyne M."/>
            <person name="Benes V."/>
            <person name="Rechmann S."/>
            <person name="Borkova D."/>
            <person name="Bloecker H."/>
            <person name="Scharfe M."/>
            <person name="Grimm M."/>
            <person name="Loehnert T.-H."/>
            <person name="Dose S."/>
            <person name="de Haan M."/>
            <person name="Maarse A.C."/>
            <person name="Schaefer M."/>
            <person name="Mueller-Auer S."/>
            <person name="Gabel C."/>
            <person name="Fuchs M."/>
            <person name="Fartmann B."/>
            <person name="Granderath K."/>
            <person name="Dauner D."/>
            <person name="Herzl A."/>
            <person name="Neumann S."/>
            <person name="Argiriou A."/>
            <person name="Vitale D."/>
            <person name="Liguori R."/>
            <person name="Piravandi E."/>
            <person name="Massenet O."/>
            <person name="Quigley F."/>
            <person name="Clabauld G."/>
            <person name="Muendlein A."/>
            <person name="Felber R."/>
            <person name="Schnabl S."/>
            <person name="Hiller R."/>
            <person name="Schmidt W."/>
            <person name="Lecharny A."/>
            <person name="Aubourg S."/>
            <person name="Chefdor F."/>
            <person name="Cooke R."/>
            <person name="Berger C."/>
            <person name="Monfort A."/>
            <person name="Casacuberta E."/>
            <person name="Gibbons T."/>
            <person name="Weber N."/>
            <person name="Vandenbol M."/>
            <person name="Bargues M."/>
            <person name="Terol J."/>
            <person name="Torres A."/>
            <person name="Perez-Perez A."/>
            <person name="Purnelle B."/>
            <person name="Bent E."/>
            <person name="Johnson S."/>
            <person name="Tacon D."/>
            <person name="Jesse T."/>
            <person name="Heijnen L."/>
            <person name="Schwarz S."/>
            <person name="Scholler P."/>
            <person name="Heber S."/>
            <person name="Francs P."/>
            <person name="Bielke C."/>
            <person name="Frishman D."/>
            <person name="Haase D."/>
            <person name="Lemcke K."/>
            <person name="Mewes H.-W."/>
            <person name="Stocker S."/>
            <person name="Zaccaria P."/>
            <person name="Bevan M."/>
            <person name="Wilson R.K."/>
            <person name="de la Bastide M."/>
            <person name="Habermann K."/>
            <person name="Parnell L."/>
            <person name="Dedhia N."/>
            <person name="Gnoj L."/>
            <person name="Schutz K."/>
            <person name="Huang E."/>
            <person name="Spiegel L."/>
            <person name="Sekhon M."/>
            <person name="Murray J."/>
            <person name="Sheet P."/>
            <person name="Cordes M."/>
            <person name="Abu-Threideh J."/>
            <person name="Stoneking T."/>
            <person name="Kalicki J."/>
            <person name="Graves T."/>
            <person name="Harmon G."/>
            <person name="Edwards J."/>
            <person name="Latreille P."/>
            <person name="Courtney L."/>
            <person name="Cloud J."/>
            <person name="Abbott A."/>
            <person name="Scott K."/>
            <person name="Johnson D."/>
            <person name="Minx P."/>
            <person name="Bentley D."/>
            <person name="Fulton B."/>
            <person name="Miller N."/>
            <person name="Greco T."/>
            <person name="Kemp K."/>
            <person name="Kramer J."/>
            <person name="Fulton L."/>
            <person name="Mardis E."/>
            <person name="Dante M."/>
            <person name="Pepin K."/>
            <person name="Hillier L.W."/>
            <person name="Nelson J."/>
            <person name="Spieth J."/>
            <person name="Ryan E."/>
            <person name="Andrews S."/>
            <person name="Geisel C."/>
            <person name="Layman D."/>
            <person name="Du H."/>
            <person name="Ali J."/>
            <person name="Berghoff A."/>
            <person name="Jones K."/>
            <person name="Drone K."/>
            <person name="Cotton M."/>
            <person name="Joshu C."/>
            <person name="Antonoiu B."/>
            <person name="Zidanic M."/>
            <person name="Strong C."/>
            <person name="Sun H."/>
            <person name="Lamar B."/>
            <person name="Yordan C."/>
            <person name="Ma P."/>
            <person name="Zhong J."/>
            <person name="Preston R."/>
            <person name="Vil D."/>
            <person name="Shekher M."/>
            <person name="Matero A."/>
            <person name="Shah R."/>
            <person name="Swaby I.K."/>
            <person name="O'Shaughnessy A."/>
            <person name="Rodriguez M."/>
            <person name="Hoffman J."/>
            <person name="Till S."/>
            <person name="Granat S."/>
            <person name="Shohdy N."/>
            <person name="Hasegawa A."/>
            <person name="Hameed A."/>
            <person name="Lodhi M."/>
            <person name="Johnson A."/>
            <person name="Chen E."/>
            <person name="Marra M.A."/>
            <person name="Martienssen R."/>
            <person name="McCombie W.R."/>
        </authorList>
    </citation>
    <scope>NUCLEOTIDE SEQUENCE [LARGE SCALE GENOMIC DNA]</scope>
    <source>
        <strain>cv. Columbia</strain>
    </source>
</reference>
<reference key="3">
    <citation type="journal article" date="2017" name="Plant J.">
        <title>Araport11: a complete reannotation of the Arabidopsis thaliana reference genome.</title>
        <authorList>
            <person name="Cheng C.Y."/>
            <person name="Krishnakumar V."/>
            <person name="Chan A.P."/>
            <person name="Thibaud-Nissen F."/>
            <person name="Schobel S."/>
            <person name="Town C.D."/>
        </authorList>
    </citation>
    <scope>GENOME REANNOTATION</scope>
    <source>
        <strain>cv. Columbia</strain>
    </source>
</reference>
<reference key="4">
    <citation type="submission" date="2007-06" db="EMBL/GenBank/DDBJ databases">
        <title>Arabidopsis ORF clones.</title>
        <authorList>
            <person name="Bautista-Mercan V.R."/>
            <person name="Kim C.J."/>
            <person name="Chen H."/>
            <person name="Quan R."/>
            <person name="De Los Reyes C."/>
            <person name="Ecker J.R."/>
        </authorList>
    </citation>
    <scope>NUCLEOTIDE SEQUENCE [LARGE SCALE MRNA]</scope>
</reference>
<reference key="5">
    <citation type="journal article" date="2009" name="Mol. Cell">
        <title>Subunit compositions of the RNA-silencing enzymes Pol IV and Pol V reveal their origins as specialized forms of RNA polymerase II.</title>
        <authorList>
            <person name="Ream T.S."/>
            <person name="Haag J.R."/>
            <person name="Wierzbicki A.T."/>
            <person name="Nicora C.D."/>
            <person name="Norbeck A.D."/>
            <person name="Zhu J.K."/>
            <person name="Hagen G."/>
            <person name="Guilfoyle T.J."/>
            <person name="Pasa-Tolic L."/>
            <person name="Pikaard C.S."/>
        </authorList>
    </citation>
    <scope>FUNCTION</scope>
    <scope>IDENTIFICATION BY MASS SPECTROMETRY</scope>
    <scope>SUBUNIT</scope>
    <scope>NOMENCLATURE</scope>
</reference>
<keyword id="KW-0002">3D-structure</keyword>
<keyword id="KW-0240">DNA-directed RNA polymerase</keyword>
<keyword id="KW-0539">Nucleus</keyword>
<keyword id="KW-1185">Reference proteome</keyword>
<keyword id="KW-0804">Transcription</keyword>
<comment type="function">
    <text evidence="2">DNA-dependent RNA polymerase catalyzes the transcription of DNA into RNA using the four ribonucleoside triphosphates as substrates. Component of RNA polymerase V involved in RNA-directed DNA methylation-dependent (RdDM) silencing of endogenous repeated sequences, including transposable elements.</text>
</comment>
<comment type="subunit">
    <text evidence="2">Component of the RNA polymerase V complex.</text>
</comment>
<comment type="subcellular location">
    <subcellularLocation>
        <location evidence="1">Nucleus</location>
    </subcellularLocation>
</comment>
<comment type="similarity">
    <text evidence="3">Belongs to the eukaryotic RPB7/RPC8 RNA polymerase subunit family.</text>
</comment>
<comment type="sequence caution" evidence="3">
    <conflict type="erroneous initiation">
        <sequence resource="EMBL-CDS" id="CAB10245"/>
    </conflict>
    <text>Truncated N-terminus.</text>
</comment>
<comment type="sequence caution" evidence="3">
    <conflict type="erroneous initiation">
        <sequence resource="EMBL-CDS" id="CAB78508"/>
    </conflict>
    <text>Truncated N-terminus.</text>
</comment>
<organism>
    <name type="scientific">Arabidopsis thaliana</name>
    <name type="common">Mouse-ear cress</name>
    <dbReference type="NCBI Taxonomy" id="3702"/>
    <lineage>
        <taxon>Eukaryota</taxon>
        <taxon>Viridiplantae</taxon>
        <taxon>Streptophyta</taxon>
        <taxon>Embryophyta</taxon>
        <taxon>Tracheophyta</taxon>
        <taxon>Spermatophyta</taxon>
        <taxon>Magnoliopsida</taxon>
        <taxon>eudicotyledons</taxon>
        <taxon>Gunneridae</taxon>
        <taxon>Pentapetalae</taxon>
        <taxon>rosids</taxon>
        <taxon>malvids</taxon>
        <taxon>Brassicales</taxon>
        <taxon>Brassicaceae</taxon>
        <taxon>Camelineae</taxon>
        <taxon>Arabidopsis</taxon>
    </lineage>
</organism>
<dbReference type="EMBL" id="Z97336">
    <property type="protein sequence ID" value="CAB10245.1"/>
    <property type="status" value="ALT_INIT"/>
    <property type="molecule type" value="Genomic_DNA"/>
</dbReference>
<dbReference type="EMBL" id="AL161539">
    <property type="protein sequence ID" value="CAB78508.1"/>
    <property type="status" value="ALT_INIT"/>
    <property type="molecule type" value="Genomic_DNA"/>
</dbReference>
<dbReference type="EMBL" id="CP002687">
    <property type="protein sequence ID" value="AEE83472.1"/>
    <property type="molecule type" value="Genomic_DNA"/>
</dbReference>
<dbReference type="EMBL" id="CP002687">
    <property type="protein sequence ID" value="ANM68074.1"/>
    <property type="molecule type" value="Genomic_DNA"/>
</dbReference>
<dbReference type="EMBL" id="CP002687">
    <property type="protein sequence ID" value="ANM68075.1"/>
    <property type="molecule type" value="Genomic_DNA"/>
</dbReference>
<dbReference type="EMBL" id="BT030624">
    <property type="protein sequence ID" value="ABR46204.1"/>
    <property type="molecule type" value="mRNA"/>
</dbReference>
<dbReference type="PIR" id="C71409">
    <property type="entry name" value="C71409"/>
</dbReference>
<dbReference type="RefSeq" id="NP_001329853.1">
    <property type="nucleotide sequence ID" value="NM_001340952.1"/>
</dbReference>
<dbReference type="RefSeq" id="NP_001329854.1">
    <property type="nucleotide sequence ID" value="NM_001340953.1"/>
</dbReference>
<dbReference type="RefSeq" id="NP_193202.2">
    <property type="nucleotide sequence ID" value="NM_117548.4"/>
</dbReference>
<dbReference type="PDB" id="8HYJ">
    <property type="method" value="EM"/>
    <property type="resolution" value="4.30 A"/>
    <property type="chains" value="G=1-178"/>
</dbReference>
<dbReference type="PDBsum" id="8HYJ"/>
<dbReference type="EMDB" id="EMD-35086"/>
<dbReference type="SMR" id="A6QRA1"/>
<dbReference type="BioGRID" id="12413">
    <property type="interactions" value="15"/>
</dbReference>
<dbReference type="FunCoup" id="A6QRA1">
    <property type="interactions" value="197"/>
</dbReference>
<dbReference type="STRING" id="3702.A6QRA1"/>
<dbReference type="PaxDb" id="3702-AT4G14660.1"/>
<dbReference type="ProteomicsDB" id="250481"/>
<dbReference type="EnsemblPlants" id="AT4G14660.1">
    <property type="protein sequence ID" value="AT4G14660.1"/>
    <property type="gene ID" value="AT4G14660"/>
</dbReference>
<dbReference type="EnsemblPlants" id="AT4G14660.2">
    <property type="protein sequence ID" value="AT4G14660.2"/>
    <property type="gene ID" value="AT4G14660"/>
</dbReference>
<dbReference type="EnsemblPlants" id="AT4G14660.3">
    <property type="protein sequence ID" value="AT4G14660.3"/>
    <property type="gene ID" value="AT4G14660"/>
</dbReference>
<dbReference type="GeneID" id="827116"/>
<dbReference type="Gramene" id="AT4G14660.1">
    <property type="protein sequence ID" value="AT4G14660.1"/>
    <property type="gene ID" value="AT4G14660"/>
</dbReference>
<dbReference type="Gramene" id="AT4G14660.2">
    <property type="protein sequence ID" value="AT4G14660.2"/>
    <property type="gene ID" value="AT4G14660"/>
</dbReference>
<dbReference type="Gramene" id="AT4G14660.3">
    <property type="protein sequence ID" value="AT4G14660.3"/>
    <property type="gene ID" value="AT4G14660"/>
</dbReference>
<dbReference type="KEGG" id="ath:AT4G14660"/>
<dbReference type="Araport" id="AT4G14660"/>
<dbReference type="TAIR" id="AT4G14660">
    <property type="gene designation" value="NRPE7"/>
</dbReference>
<dbReference type="eggNOG" id="KOG3298">
    <property type="taxonomic scope" value="Eukaryota"/>
</dbReference>
<dbReference type="HOGENOM" id="CLU_085878_3_0_1"/>
<dbReference type="InParanoid" id="A6QRA1"/>
<dbReference type="OMA" id="PWNVIIA"/>
<dbReference type="PhylomeDB" id="A6QRA1"/>
<dbReference type="PRO" id="PR:A6QRA1"/>
<dbReference type="Proteomes" id="UP000006548">
    <property type="component" value="Chromosome 4"/>
</dbReference>
<dbReference type="ExpressionAtlas" id="A6QRA1">
    <property type="expression patterns" value="baseline and differential"/>
</dbReference>
<dbReference type="GO" id="GO:0000419">
    <property type="term" value="C:RNA polymerase V complex"/>
    <property type="evidence" value="ECO:0000314"/>
    <property type="project" value="UniProtKB"/>
</dbReference>
<dbReference type="GO" id="GO:0006352">
    <property type="term" value="P:DNA-templated transcription initiation"/>
    <property type="evidence" value="ECO:0007669"/>
    <property type="project" value="InterPro"/>
</dbReference>
<dbReference type="CDD" id="cd04329">
    <property type="entry name" value="RNAP_II_Rpb7_N"/>
    <property type="match status" value="1"/>
</dbReference>
<dbReference type="FunFam" id="2.40.50.140:FF:000043">
    <property type="entry name" value="DNA-directed RNA polymerase II subunit RPB7"/>
    <property type="match status" value="1"/>
</dbReference>
<dbReference type="FunFam" id="3.30.1490.120:FF:000001">
    <property type="entry name" value="DNA-directed RNA polymerase II subunit RPB7"/>
    <property type="match status" value="1"/>
</dbReference>
<dbReference type="Gene3D" id="2.40.50.140">
    <property type="entry name" value="Nucleic acid-binding proteins"/>
    <property type="match status" value="1"/>
</dbReference>
<dbReference type="Gene3D" id="3.30.1490.120">
    <property type="entry name" value="RNA polymerase Rpb7-like, N-terminal domain"/>
    <property type="match status" value="1"/>
</dbReference>
<dbReference type="InterPro" id="IPR012340">
    <property type="entry name" value="NA-bd_OB-fold"/>
</dbReference>
<dbReference type="InterPro" id="IPR036898">
    <property type="entry name" value="RNA_pol_Rpb7-like_N_sf"/>
</dbReference>
<dbReference type="InterPro" id="IPR045113">
    <property type="entry name" value="Rpb7-like"/>
</dbReference>
<dbReference type="InterPro" id="IPR005576">
    <property type="entry name" value="Rpb7-like_N"/>
</dbReference>
<dbReference type="PANTHER" id="PTHR12709">
    <property type="entry name" value="DNA-DIRECTED RNA POLYMERASE II, III"/>
    <property type="match status" value="1"/>
</dbReference>
<dbReference type="PANTHER" id="PTHR12709:SF3">
    <property type="entry name" value="DNA-DIRECTED RNA POLYMERASE V SUBUNIT 7"/>
    <property type="match status" value="1"/>
</dbReference>
<dbReference type="Pfam" id="PF03876">
    <property type="entry name" value="SHS2_Rpb7-N"/>
    <property type="match status" value="1"/>
</dbReference>
<dbReference type="SUPFAM" id="SSF88798">
    <property type="entry name" value="N-terminal, heterodimerisation domain of RBP7 (RpoE)"/>
    <property type="match status" value="1"/>
</dbReference>
<dbReference type="SUPFAM" id="SSF50249">
    <property type="entry name" value="Nucleic acid-binding proteins"/>
    <property type="match status" value="1"/>
</dbReference>
<sequence length="178" mass="20262">MFLKVQLPWNVMIPAENMDAKGLMLKRAILVELLEAFASKKATKELGYYVAVTTLDKIGEGKIREHTGEVLFPVMFSGMTFKIFKGEIIHGVVHKVLKHGVFMRCGPIENVYLSYTKMPDYKYIPGENPIFMNEKTSRIQVETTVRVVVIGIKWMEVEREFQALASLEGDYLGPLSEE</sequence>
<gene>
    <name type="primary">NRPE7</name>
    <name type="ordered locus">At4g14660</name>
    <name type="ORF">dl3370c</name>
</gene>
<evidence type="ECO:0000250" key="1"/>
<evidence type="ECO:0000269" key="2">
    <source>
    </source>
</evidence>
<evidence type="ECO:0000305" key="3"/>